<dbReference type="EC" id="6.3.2.9" evidence="1"/>
<dbReference type="EMBL" id="CP000408">
    <property type="protein sequence ID" value="ABP91627.1"/>
    <property type="molecule type" value="Genomic_DNA"/>
</dbReference>
<dbReference type="SMR" id="A4VZT8"/>
<dbReference type="KEGG" id="ssv:SSU98_0469"/>
<dbReference type="HOGENOM" id="CLU_032540_0_1_9"/>
<dbReference type="UniPathway" id="UPA00219"/>
<dbReference type="GO" id="GO:0005737">
    <property type="term" value="C:cytoplasm"/>
    <property type="evidence" value="ECO:0007669"/>
    <property type="project" value="UniProtKB-SubCell"/>
</dbReference>
<dbReference type="GO" id="GO:0005524">
    <property type="term" value="F:ATP binding"/>
    <property type="evidence" value="ECO:0007669"/>
    <property type="project" value="UniProtKB-UniRule"/>
</dbReference>
<dbReference type="GO" id="GO:0008764">
    <property type="term" value="F:UDP-N-acetylmuramoylalanine-D-glutamate ligase activity"/>
    <property type="evidence" value="ECO:0007669"/>
    <property type="project" value="UniProtKB-UniRule"/>
</dbReference>
<dbReference type="GO" id="GO:0051301">
    <property type="term" value="P:cell division"/>
    <property type="evidence" value="ECO:0007669"/>
    <property type="project" value="UniProtKB-KW"/>
</dbReference>
<dbReference type="GO" id="GO:0071555">
    <property type="term" value="P:cell wall organization"/>
    <property type="evidence" value="ECO:0007669"/>
    <property type="project" value="UniProtKB-KW"/>
</dbReference>
<dbReference type="GO" id="GO:0009252">
    <property type="term" value="P:peptidoglycan biosynthetic process"/>
    <property type="evidence" value="ECO:0007669"/>
    <property type="project" value="UniProtKB-UniRule"/>
</dbReference>
<dbReference type="GO" id="GO:0008360">
    <property type="term" value="P:regulation of cell shape"/>
    <property type="evidence" value="ECO:0007669"/>
    <property type="project" value="UniProtKB-KW"/>
</dbReference>
<dbReference type="Gene3D" id="3.90.190.20">
    <property type="entry name" value="Mur ligase, C-terminal domain"/>
    <property type="match status" value="1"/>
</dbReference>
<dbReference type="Gene3D" id="3.40.1190.10">
    <property type="entry name" value="Mur-like, catalytic domain"/>
    <property type="match status" value="1"/>
</dbReference>
<dbReference type="Gene3D" id="3.40.50.720">
    <property type="entry name" value="NAD(P)-binding Rossmann-like Domain"/>
    <property type="match status" value="1"/>
</dbReference>
<dbReference type="HAMAP" id="MF_00639">
    <property type="entry name" value="MurD"/>
    <property type="match status" value="1"/>
</dbReference>
<dbReference type="InterPro" id="IPR036565">
    <property type="entry name" value="Mur-like_cat_sf"/>
</dbReference>
<dbReference type="InterPro" id="IPR004101">
    <property type="entry name" value="Mur_ligase_C"/>
</dbReference>
<dbReference type="InterPro" id="IPR036615">
    <property type="entry name" value="Mur_ligase_C_dom_sf"/>
</dbReference>
<dbReference type="InterPro" id="IPR013221">
    <property type="entry name" value="Mur_ligase_cen"/>
</dbReference>
<dbReference type="InterPro" id="IPR005762">
    <property type="entry name" value="MurD"/>
</dbReference>
<dbReference type="NCBIfam" id="TIGR01087">
    <property type="entry name" value="murD"/>
    <property type="match status" value="1"/>
</dbReference>
<dbReference type="PANTHER" id="PTHR43692">
    <property type="entry name" value="UDP-N-ACETYLMURAMOYLALANINE--D-GLUTAMATE LIGASE"/>
    <property type="match status" value="1"/>
</dbReference>
<dbReference type="PANTHER" id="PTHR43692:SF1">
    <property type="entry name" value="UDP-N-ACETYLMURAMOYLALANINE--D-GLUTAMATE LIGASE"/>
    <property type="match status" value="1"/>
</dbReference>
<dbReference type="Pfam" id="PF02875">
    <property type="entry name" value="Mur_ligase_C"/>
    <property type="match status" value="1"/>
</dbReference>
<dbReference type="Pfam" id="PF08245">
    <property type="entry name" value="Mur_ligase_M"/>
    <property type="match status" value="1"/>
</dbReference>
<dbReference type="Pfam" id="PF21799">
    <property type="entry name" value="MurD-like_N"/>
    <property type="match status" value="1"/>
</dbReference>
<dbReference type="SUPFAM" id="SSF51984">
    <property type="entry name" value="MurCD N-terminal domain"/>
    <property type="match status" value="1"/>
</dbReference>
<dbReference type="SUPFAM" id="SSF53623">
    <property type="entry name" value="MurD-like peptide ligases, catalytic domain"/>
    <property type="match status" value="1"/>
</dbReference>
<dbReference type="SUPFAM" id="SSF53244">
    <property type="entry name" value="MurD-like peptide ligases, peptide-binding domain"/>
    <property type="match status" value="1"/>
</dbReference>
<accession>A4VZT8</accession>
<organism>
    <name type="scientific">Streptococcus suis (strain 98HAH33)</name>
    <dbReference type="NCBI Taxonomy" id="391296"/>
    <lineage>
        <taxon>Bacteria</taxon>
        <taxon>Bacillati</taxon>
        <taxon>Bacillota</taxon>
        <taxon>Bacilli</taxon>
        <taxon>Lactobacillales</taxon>
        <taxon>Streptococcaceae</taxon>
        <taxon>Streptococcus</taxon>
    </lineage>
</organism>
<protein>
    <recommendedName>
        <fullName evidence="1">UDP-N-acetylmuramoylalanine--D-glutamate ligase</fullName>
        <ecNumber evidence="1">6.3.2.9</ecNumber>
    </recommendedName>
    <alternativeName>
        <fullName evidence="1">D-glutamic acid-adding enzyme</fullName>
    </alternativeName>
    <alternativeName>
        <fullName evidence="1">UDP-N-acetylmuramoyl-L-alanyl-D-glutamate synthetase</fullName>
    </alternativeName>
</protein>
<reference key="1">
    <citation type="journal article" date="2007" name="PLoS ONE">
        <title>A glimpse of streptococcal toxic shock syndrome from comparative genomics of S. suis 2 Chinese isolates.</title>
        <authorList>
            <person name="Chen C."/>
            <person name="Tang J."/>
            <person name="Dong W."/>
            <person name="Wang C."/>
            <person name="Feng Y."/>
            <person name="Wang J."/>
            <person name="Zheng F."/>
            <person name="Pan X."/>
            <person name="Liu D."/>
            <person name="Li M."/>
            <person name="Song Y."/>
            <person name="Zhu X."/>
            <person name="Sun H."/>
            <person name="Feng T."/>
            <person name="Guo Z."/>
            <person name="Ju A."/>
            <person name="Ge J."/>
            <person name="Dong Y."/>
            <person name="Sun W."/>
            <person name="Jiang Y."/>
            <person name="Wang J."/>
            <person name="Yan J."/>
            <person name="Yang H."/>
            <person name="Wang X."/>
            <person name="Gao G.F."/>
            <person name="Yang R."/>
            <person name="Wang J."/>
            <person name="Yu J."/>
        </authorList>
    </citation>
    <scope>NUCLEOTIDE SEQUENCE [LARGE SCALE GENOMIC DNA]</scope>
    <source>
        <strain>98HAH33</strain>
    </source>
</reference>
<name>MURD_STRS2</name>
<comment type="function">
    <text evidence="1">Cell wall formation. Catalyzes the addition of glutamate to the nucleotide precursor UDP-N-acetylmuramoyl-L-alanine (UMA).</text>
</comment>
<comment type="catalytic activity">
    <reaction evidence="1">
        <text>UDP-N-acetyl-alpha-D-muramoyl-L-alanine + D-glutamate + ATP = UDP-N-acetyl-alpha-D-muramoyl-L-alanyl-D-glutamate + ADP + phosphate + H(+)</text>
        <dbReference type="Rhea" id="RHEA:16429"/>
        <dbReference type="ChEBI" id="CHEBI:15378"/>
        <dbReference type="ChEBI" id="CHEBI:29986"/>
        <dbReference type="ChEBI" id="CHEBI:30616"/>
        <dbReference type="ChEBI" id="CHEBI:43474"/>
        <dbReference type="ChEBI" id="CHEBI:83898"/>
        <dbReference type="ChEBI" id="CHEBI:83900"/>
        <dbReference type="ChEBI" id="CHEBI:456216"/>
        <dbReference type="EC" id="6.3.2.9"/>
    </reaction>
</comment>
<comment type="pathway">
    <text evidence="1">Cell wall biogenesis; peptidoglycan biosynthesis.</text>
</comment>
<comment type="subcellular location">
    <subcellularLocation>
        <location evidence="1">Cytoplasm</location>
    </subcellularLocation>
</comment>
<comment type="similarity">
    <text evidence="1">Belongs to the MurCDEF family.</text>
</comment>
<gene>
    <name evidence="1" type="primary">murD</name>
    <name type="ordered locus">SSU98_0469</name>
</gene>
<proteinExistence type="inferred from homology"/>
<feature type="chain" id="PRO_0000301454" description="UDP-N-acetylmuramoylalanine--D-glutamate ligase">
    <location>
        <begin position="1"/>
        <end position="449"/>
    </location>
</feature>
<feature type="binding site" evidence="1">
    <location>
        <begin position="119"/>
        <end position="125"/>
    </location>
    <ligand>
        <name>ATP</name>
        <dbReference type="ChEBI" id="CHEBI:30616"/>
    </ligand>
</feature>
<keyword id="KW-0067">ATP-binding</keyword>
<keyword id="KW-0131">Cell cycle</keyword>
<keyword id="KW-0132">Cell division</keyword>
<keyword id="KW-0133">Cell shape</keyword>
<keyword id="KW-0961">Cell wall biogenesis/degradation</keyword>
<keyword id="KW-0963">Cytoplasm</keyword>
<keyword id="KW-0436">Ligase</keyword>
<keyword id="KW-0547">Nucleotide-binding</keyword>
<keyword id="KW-0573">Peptidoglycan synthesis</keyword>
<sequence length="449" mass="48486">MKMIDIVKNKKVLVLGLAKSGESAARLLDKLGAIVTVNDGKPFEENPTAQSLLEDGIRVICGSHPLELLDEDFALMVKNPGIRYDNPMVEKAIGKGIPVWTEVELAYLVSDVPIVGITGSNGKTTTTTMIAEVLNAGKKPAKLCGNIGYPASSVAQTATAEDTLVMELSSFQLMGTESFHPHIAVVTNLIASHIDYHGTFEDYVAAKWMIQRQMTAEDFVVINFNQKEAKELAGQTKATVVPFSTQEVVDGAYLADGKLYFKGEYIMDADQIGVPGSHNVENALATIVVAKLLGVDQQAIQESLSAFGGVKHRLQFVGEINGVSFYNDSKSTNILATQKALSGFDNSKVILIAGGLDRGNEFDELVPDLVGLKKMVILGQSAPRVQRAADKAEVETIEALDIADATRKAFAIAEKGDIVLLSPANASWDMYANFEVRGDVFLQTFEELK</sequence>
<evidence type="ECO:0000255" key="1">
    <source>
        <dbReference type="HAMAP-Rule" id="MF_00639"/>
    </source>
</evidence>